<accession>Q2T0K1</accession>
<proteinExistence type="inferred from homology"/>
<evidence type="ECO:0000255" key="1">
    <source>
        <dbReference type="HAMAP-Rule" id="MF_00409"/>
    </source>
</evidence>
<evidence type="ECO:0000305" key="2"/>
<dbReference type="EC" id="2.7.1.130" evidence="1"/>
<dbReference type="EMBL" id="CP000086">
    <property type="protein sequence ID" value="ABC38937.1"/>
    <property type="status" value="ALT_INIT"/>
    <property type="molecule type" value="Genomic_DNA"/>
</dbReference>
<dbReference type="RefSeq" id="WP_025369540.1">
    <property type="nucleotide sequence ID" value="NZ_CP008785.1"/>
</dbReference>
<dbReference type="SMR" id="Q2T0K1"/>
<dbReference type="GeneID" id="45120499"/>
<dbReference type="KEGG" id="bte:BTH_I0742"/>
<dbReference type="HOGENOM" id="CLU_038816_2_0_4"/>
<dbReference type="UniPathway" id="UPA00359">
    <property type="reaction ID" value="UER00482"/>
</dbReference>
<dbReference type="Proteomes" id="UP000001930">
    <property type="component" value="Chromosome I"/>
</dbReference>
<dbReference type="GO" id="GO:0005886">
    <property type="term" value="C:plasma membrane"/>
    <property type="evidence" value="ECO:0007669"/>
    <property type="project" value="TreeGrafter"/>
</dbReference>
<dbReference type="GO" id="GO:0005524">
    <property type="term" value="F:ATP binding"/>
    <property type="evidence" value="ECO:0007669"/>
    <property type="project" value="UniProtKB-UniRule"/>
</dbReference>
<dbReference type="GO" id="GO:0009029">
    <property type="term" value="F:tetraacyldisaccharide 4'-kinase activity"/>
    <property type="evidence" value="ECO:0007669"/>
    <property type="project" value="UniProtKB-UniRule"/>
</dbReference>
<dbReference type="GO" id="GO:0009245">
    <property type="term" value="P:lipid A biosynthetic process"/>
    <property type="evidence" value="ECO:0007669"/>
    <property type="project" value="UniProtKB-UniRule"/>
</dbReference>
<dbReference type="GO" id="GO:0009244">
    <property type="term" value="P:lipopolysaccharide core region biosynthetic process"/>
    <property type="evidence" value="ECO:0007669"/>
    <property type="project" value="TreeGrafter"/>
</dbReference>
<dbReference type="HAMAP" id="MF_00409">
    <property type="entry name" value="LpxK"/>
    <property type="match status" value="1"/>
</dbReference>
<dbReference type="InterPro" id="IPR003758">
    <property type="entry name" value="LpxK"/>
</dbReference>
<dbReference type="InterPro" id="IPR027417">
    <property type="entry name" value="P-loop_NTPase"/>
</dbReference>
<dbReference type="NCBIfam" id="TIGR00682">
    <property type="entry name" value="lpxK"/>
    <property type="match status" value="1"/>
</dbReference>
<dbReference type="PANTHER" id="PTHR42724">
    <property type="entry name" value="TETRAACYLDISACCHARIDE 4'-KINASE"/>
    <property type="match status" value="1"/>
</dbReference>
<dbReference type="PANTHER" id="PTHR42724:SF1">
    <property type="entry name" value="TETRAACYLDISACCHARIDE 4'-KINASE, MITOCHONDRIAL-RELATED"/>
    <property type="match status" value="1"/>
</dbReference>
<dbReference type="Pfam" id="PF02606">
    <property type="entry name" value="LpxK"/>
    <property type="match status" value="1"/>
</dbReference>
<dbReference type="SUPFAM" id="SSF52540">
    <property type="entry name" value="P-loop containing nucleoside triphosphate hydrolases"/>
    <property type="match status" value="1"/>
</dbReference>
<reference key="1">
    <citation type="journal article" date="2005" name="BMC Genomics">
        <title>Bacterial genome adaptation to niches: divergence of the potential virulence genes in three Burkholderia species of different survival strategies.</title>
        <authorList>
            <person name="Kim H.S."/>
            <person name="Schell M.A."/>
            <person name="Yu Y."/>
            <person name="Ulrich R.L."/>
            <person name="Sarria S.H."/>
            <person name="Nierman W.C."/>
            <person name="DeShazer D."/>
        </authorList>
    </citation>
    <scope>NUCLEOTIDE SEQUENCE [LARGE SCALE GENOMIC DNA]</scope>
    <source>
        <strain>ATCC 700388 / DSM 13276 / CCUG 48851 / CIP 106301 / E264</strain>
    </source>
</reference>
<organism>
    <name type="scientific">Burkholderia thailandensis (strain ATCC 700388 / DSM 13276 / CCUG 48851 / CIP 106301 / E264)</name>
    <dbReference type="NCBI Taxonomy" id="271848"/>
    <lineage>
        <taxon>Bacteria</taxon>
        <taxon>Pseudomonadati</taxon>
        <taxon>Pseudomonadota</taxon>
        <taxon>Betaproteobacteria</taxon>
        <taxon>Burkholderiales</taxon>
        <taxon>Burkholderiaceae</taxon>
        <taxon>Burkholderia</taxon>
        <taxon>pseudomallei group</taxon>
    </lineage>
</organism>
<feature type="chain" id="PRO_0000291200" description="Tetraacyldisaccharide 4'-kinase">
    <location>
        <begin position="1"/>
        <end position="342"/>
    </location>
</feature>
<feature type="binding site" evidence="1">
    <location>
        <begin position="68"/>
        <end position="75"/>
    </location>
    <ligand>
        <name>ATP</name>
        <dbReference type="ChEBI" id="CHEBI:30616"/>
    </ligand>
</feature>
<keyword id="KW-0067">ATP-binding</keyword>
<keyword id="KW-0418">Kinase</keyword>
<keyword id="KW-0441">Lipid A biosynthesis</keyword>
<keyword id="KW-0444">Lipid biosynthesis</keyword>
<keyword id="KW-0443">Lipid metabolism</keyword>
<keyword id="KW-0547">Nucleotide-binding</keyword>
<keyword id="KW-0808">Transferase</keyword>
<sequence>MSARPGLLARAEARLTREWQRRGALAWALTPFACAFGAIAALRRAAYARGWKARVDCGVPVVVVGNVTVGGTGKTPTVIALVDALRAAGFTPGVVSRGYGAKIVAPTAVTPASAPQQAGDEPLLIARRTLAPVWVCPDRVAAVRALKAAHPEVDVVVSDDGLQHYRLARAVEIVVFDHRLGGNGFLLPAGPLREPLSRRRDATLVNDPYSRALPPWPDTFALSLAPGDAWHLARPSRRKPLAQFAGERVLAAAGIGAPERFFATLRAAGVTPATRALPDHYAFATNPFVDDHFDAILITEKDAVKLGTSWRDARIWVVPVEAALDPRLIALVVEKLRGRTSA</sequence>
<gene>
    <name evidence="1" type="primary">lpxK</name>
    <name type="ordered locus">BTH_I0742</name>
</gene>
<name>LPXK_BURTA</name>
<comment type="function">
    <text evidence="1">Transfers the gamma-phosphate of ATP to the 4'-position of a tetraacyldisaccharide 1-phosphate intermediate (termed DS-1-P) to form tetraacyldisaccharide 1,4'-bis-phosphate (lipid IVA).</text>
</comment>
<comment type="catalytic activity">
    <reaction evidence="1">
        <text>a lipid A disaccharide + ATP = a lipid IVA + ADP + H(+)</text>
        <dbReference type="Rhea" id="RHEA:67840"/>
        <dbReference type="ChEBI" id="CHEBI:15378"/>
        <dbReference type="ChEBI" id="CHEBI:30616"/>
        <dbReference type="ChEBI" id="CHEBI:176343"/>
        <dbReference type="ChEBI" id="CHEBI:176425"/>
        <dbReference type="ChEBI" id="CHEBI:456216"/>
        <dbReference type="EC" id="2.7.1.130"/>
    </reaction>
</comment>
<comment type="pathway">
    <text evidence="1">Glycolipid biosynthesis; lipid IV(A) biosynthesis; lipid IV(A) from (3R)-3-hydroxytetradecanoyl-[acyl-carrier-protein] and UDP-N-acetyl-alpha-D-glucosamine: step 6/6.</text>
</comment>
<comment type="similarity">
    <text evidence="1">Belongs to the LpxK family.</text>
</comment>
<comment type="sequence caution" evidence="2">
    <conflict type="erroneous initiation">
        <sequence resource="EMBL-CDS" id="ABC38937"/>
    </conflict>
</comment>
<protein>
    <recommendedName>
        <fullName evidence="1">Tetraacyldisaccharide 4'-kinase</fullName>
        <ecNumber evidence="1">2.7.1.130</ecNumber>
    </recommendedName>
    <alternativeName>
        <fullName evidence="1">Lipid A 4'-kinase</fullName>
    </alternativeName>
</protein>